<accession>A3N856</accession>
<dbReference type="EC" id="5.4.2.10" evidence="1"/>
<dbReference type="EMBL" id="CP000570">
    <property type="protein sequence ID" value="ABN84616.1"/>
    <property type="molecule type" value="Genomic_DNA"/>
</dbReference>
<dbReference type="RefSeq" id="WP_011851403.1">
    <property type="nucleotide sequence ID" value="NC_009074.1"/>
</dbReference>
<dbReference type="SMR" id="A3N856"/>
<dbReference type="KEGG" id="bpd:BURPS668_1484"/>
<dbReference type="HOGENOM" id="CLU_016950_7_0_4"/>
<dbReference type="GO" id="GO:0005829">
    <property type="term" value="C:cytosol"/>
    <property type="evidence" value="ECO:0007669"/>
    <property type="project" value="TreeGrafter"/>
</dbReference>
<dbReference type="GO" id="GO:0000287">
    <property type="term" value="F:magnesium ion binding"/>
    <property type="evidence" value="ECO:0007669"/>
    <property type="project" value="UniProtKB-UniRule"/>
</dbReference>
<dbReference type="GO" id="GO:0008966">
    <property type="term" value="F:phosphoglucosamine mutase activity"/>
    <property type="evidence" value="ECO:0007669"/>
    <property type="project" value="UniProtKB-UniRule"/>
</dbReference>
<dbReference type="GO" id="GO:0004615">
    <property type="term" value="F:phosphomannomutase activity"/>
    <property type="evidence" value="ECO:0007669"/>
    <property type="project" value="TreeGrafter"/>
</dbReference>
<dbReference type="GO" id="GO:0005975">
    <property type="term" value="P:carbohydrate metabolic process"/>
    <property type="evidence" value="ECO:0007669"/>
    <property type="project" value="InterPro"/>
</dbReference>
<dbReference type="GO" id="GO:0009252">
    <property type="term" value="P:peptidoglycan biosynthetic process"/>
    <property type="evidence" value="ECO:0007669"/>
    <property type="project" value="TreeGrafter"/>
</dbReference>
<dbReference type="GO" id="GO:0006048">
    <property type="term" value="P:UDP-N-acetylglucosamine biosynthetic process"/>
    <property type="evidence" value="ECO:0007669"/>
    <property type="project" value="TreeGrafter"/>
</dbReference>
<dbReference type="CDD" id="cd05802">
    <property type="entry name" value="GlmM"/>
    <property type="match status" value="1"/>
</dbReference>
<dbReference type="FunFam" id="3.30.310.50:FF:000001">
    <property type="entry name" value="Phosphoglucosamine mutase"/>
    <property type="match status" value="1"/>
</dbReference>
<dbReference type="FunFam" id="3.40.120.10:FF:000001">
    <property type="entry name" value="Phosphoglucosamine mutase"/>
    <property type="match status" value="1"/>
</dbReference>
<dbReference type="FunFam" id="3.40.120.10:FF:000003">
    <property type="entry name" value="Phosphoglucosamine mutase"/>
    <property type="match status" value="1"/>
</dbReference>
<dbReference type="Gene3D" id="3.40.120.10">
    <property type="entry name" value="Alpha-D-Glucose-1,6-Bisphosphate, subunit A, domain 3"/>
    <property type="match status" value="3"/>
</dbReference>
<dbReference type="Gene3D" id="3.30.310.50">
    <property type="entry name" value="Alpha-D-phosphohexomutase, C-terminal domain"/>
    <property type="match status" value="1"/>
</dbReference>
<dbReference type="HAMAP" id="MF_01554_B">
    <property type="entry name" value="GlmM_B"/>
    <property type="match status" value="1"/>
</dbReference>
<dbReference type="InterPro" id="IPR005844">
    <property type="entry name" value="A-D-PHexomutase_a/b/a-I"/>
</dbReference>
<dbReference type="InterPro" id="IPR016055">
    <property type="entry name" value="A-D-PHexomutase_a/b/a-I/II/III"/>
</dbReference>
<dbReference type="InterPro" id="IPR005845">
    <property type="entry name" value="A-D-PHexomutase_a/b/a-II"/>
</dbReference>
<dbReference type="InterPro" id="IPR005846">
    <property type="entry name" value="A-D-PHexomutase_a/b/a-III"/>
</dbReference>
<dbReference type="InterPro" id="IPR005843">
    <property type="entry name" value="A-D-PHexomutase_C"/>
</dbReference>
<dbReference type="InterPro" id="IPR036900">
    <property type="entry name" value="A-D-PHexomutase_C_sf"/>
</dbReference>
<dbReference type="InterPro" id="IPR016066">
    <property type="entry name" value="A-D-PHexomutase_CS"/>
</dbReference>
<dbReference type="InterPro" id="IPR005841">
    <property type="entry name" value="Alpha-D-phosphohexomutase_SF"/>
</dbReference>
<dbReference type="InterPro" id="IPR006352">
    <property type="entry name" value="GlmM_bact"/>
</dbReference>
<dbReference type="InterPro" id="IPR050060">
    <property type="entry name" value="Phosphoglucosamine_mutase"/>
</dbReference>
<dbReference type="NCBIfam" id="TIGR01455">
    <property type="entry name" value="glmM"/>
    <property type="match status" value="1"/>
</dbReference>
<dbReference type="NCBIfam" id="NF008139">
    <property type="entry name" value="PRK10887.1"/>
    <property type="match status" value="1"/>
</dbReference>
<dbReference type="PANTHER" id="PTHR42946:SF1">
    <property type="entry name" value="PHOSPHOGLUCOMUTASE (ALPHA-D-GLUCOSE-1,6-BISPHOSPHATE-DEPENDENT)"/>
    <property type="match status" value="1"/>
</dbReference>
<dbReference type="PANTHER" id="PTHR42946">
    <property type="entry name" value="PHOSPHOHEXOSE MUTASE"/>
    <property type="match status" value="1"/>
</dbReference>
<dbReference type="Pfam" id="PF02878">
    <property type="entry name" value="PGM_PMM_I"/>
    <property type="match status" value="1"/>
</dbReference>
<dbReference type="Pfam" id="PF02879">
    <property type="entry name" value="PGM_PMM_II"/>
    <property type="match status" value="1"/>
</dbReference>
<dbReference type="Pfam" id="PF02880">
    <property type="entry name" value="PGM_PMM_III"/>
    <property type="match status" value="1"/>
</dbReference>
<dbReference type="Pfam" id="PF00408">
    <property type="entry name" value="PGM_PMM_IV"/>
    <property type="match status" value="1"/>
</dbReference>
<dbReference type="PRINTS" id="PR00509">
    <property type="entry name" value="PGMPMM"/>
</dbReference>
<dbReference type="SUPFAM" id="SSF55957">
    <property type="entry name" value="Phosphoglucomutase, C-terminal domain"/>
    <property type="match status" value="1"/>
</dbReference>
<dbReference type="SUPFAM" id="SSF53738">
    <property type="entry name" value="Phosphoglucomutase, first 3 domains"/>
    <property type="match status" value="3"/>
</dbReference>
<dbReference type="PROSITE" id="PS00710">
    <property type="entry name" value="PGM_PMM"/>
    <property type="match status" value="1"/>
</dbReference>
<gene>
    <name evidence="1" type="primary">glmM</name>
    <name type="ordered locus">BURPS668_1484</name>
</gene>
<evidence type="ECO:0000255" key="1">
    <source>
        <dbReference type="HAMAP-Rule" id="MF_01554"/>
    </source>
</evidence>
<organism>
    <name type="scientific">Burkholderia pseudomallei (strain 668)</name>
    <dbReference type="NCBI Taxonomy" id="320373"/>
    <lineage>
        <taxon>Bacteria</taxon>
        <taxon>Pseudomonadati</taxon>
        <taxon>Pseudomonadota</taxon>
        <taxon>Betaproteobacteria</taxon>
        <taxon>Burkholderiales</taxon>
        <taxon>Burkholderiaceae</taxon>
        <taxon>Burkholderia</taxon>
        <taxon>pseudomallei group</taxon>
    </lineage>
</organism>
<proteinExistence type="inferred from homology"/>
<reference key="1">
    <citation type="journal article" date="2010" name="Genome Biol. Evol.">
        <title>Continuing evolution of Burkholderia mallei through genome reduction and large-scale rearrangements.</title>
        <authorList>
            <person name="Losada L."/>
            <person name="Ronning C.M."/>
            <person name="DeShazer D."/>
            <person name="Woods D."/>
            <person name="Fedorova N."/>
            <person name="Kim H.S."/>
            <person name="Shabalina S.A."/>
            <person name="Pearson T.R."/>
            <person name="Brinkac L."/>
            <person name="Tan P."/>
            <person name="Nandi T."/>
            <person name="Crabtree J."/>
            <person name="Badger J."/>
            <person name="Beckstrom-Sternberg S."/>
            <person name="Saqib M."/>
            <person name="Schutzer S.E."/>
            <person name="Keim P."/>
            <person name="Nierman W.C."/>
        </authorList>
    </citation>
    <scope>NUCLEOTIDE SEQUENCE [LARGE SCALE GENOMIC DNA]</scope>
    <source>
        <strain>668</strain>
    </source>
</reference>
<protein>
    <recommendedName>
        <fullName evidence="1">Phosphoglucosamine mutase</fullName>
        <ecNumber evidence="1">5.4.2.10</ecNumber>
    </recommendedName>
</protein>
<sequence>MGRRYFGTDGIRGKVGDAPITPDFVLRLGYAAGKVLASAPGRAASGARPTVLIGKDTRVSGYMLEAALEAGFSAAGVDVMLAGPMPTPGVAYLTRALRLSAGVVISASHNPYHDNGIKFFSADGNKLPDEIEAKIEAWLDKPLDCAASDGLGKARRLDDAAGRYIEFCKSTFPAAFDLRGMKLVVDCAHGAAYQVAPHVFHELGADVIPIGVAPNGFNINDGVGATAPDALMRAVRANHADLGIALDGDADRLLVVDHTGRLYNGDELLYVLVKDRIATNGQVEGAVGTLMTNFAVEVALKEAGVQFVRAAVGDRYVLEQLRERGWQLGAEGSGHILSLDRHSTGDGIVSALLVLAALKRSGKTLAQMLEGVTLFPQKLINVRMKPGADWKGSEAIRRAIDSAEQALSGSGRVLIRASGTEPVLRVMVEARQATDANRHAEAIADAVKQATA</sequence>
<comment type="function">
    <text evidence="1">Catalyzes the conversion of glucosamine-6-phosphate to glucosamine-1-phosphate.</text>
</comment>
<comment type="catalytic activity">
    <reaction evidence="1">
        <text>alpha-D-glucosamine 1-phosphate = D-glucosamine 6-phosphate</text>
        <dbReference type="Rhea" id="RHEA:23424"/>
        <dbReference type="ChEBI" id="CHEBI:58516"/>
        <dbReference type="ChEBI" id="CHEBI:58725"/>
        <dbReference type="EC" id="5.4.2.10"/>
    </reaction>
</comment>
<comment type="cofactor">
    <cofactor evidence="1">
        <name>Mg(2+)</name>
        <dbReference type="ChEBI" id="CHEBI:18420"/>
    </cofactor>
    <text evidence="1">Binds 1 Mg(2+) ion per subunit.</text>
</comment>
<comment type="PTM">
    <text evidence="1">Activated by phosphorylation.</text>
</comment>
<comment type="similarity">
    <text evidence="1">Belongs to the phosphohexose mutase family.</text>
</comment>
<feature type="chain" id="PRO_1000068892" description="Phosphoglucosamine mutase">
    <location>
        <begin position="1"/>
        <end position="452"/>
    </location>
</feature>
<feature type="active site" description="Phosphoserine intermediate" evidence="1">
    <location>
        <position position="108"/>
    </location>
</feature>
<feature type="binding site" description="via phosphate group" evidence="1">
    <location>
        <position position="108"/>
    </location>
    <ligand>
        <name>Mg(2+)</name>
        <dbReference type="ChEBI" id="CHEBI:18420"/>
    </ligand>
</feature>
<feature type="binding site" evidence="1">
    <location>
        <position position="247"/>
    </location>
    <ligand>
        <name>Mg(2+)</name>
        <dbReference type="ChEBI" id="CHEBI:18420"/>
    </ligand>
</feature>
<feature type="binding site" evidence="1">
    <location>
        <position position="249"/>
    </location>
    <ligand>
        <name>Mg(2+)</name>
        <dbReference type="ChEBI" id="CHEBI:18420"/>
    </ligand>
</feature>
<feature type="binding site" evidence="1">
    <location>
        <position position="251"/>
    </location>
    <ligand>
        <name>Mg(2+)</name>
        <dbReference type="ChEBI" id="CHEBI:18420"/>
    </ligand>
</feature>
<feature type="modified residue" description="Phosphoserine" evidence="1">
    <location>
        <position position="108"/>
    </location>
</feature>
<name>GLMM_BURP6</name>
<keyword id="KW-0413">Isomerase</keyword>
<keyword id="KW-0460">Magnesium</keyword>
<keyword id="KW-0479">Metal-binding</keyword>
<keyword id="KW-0597">Phosphoprotein</keyword>